<sequence>MARYIGPKCKLSRREGTDLFLKSARRSLDSKCKLDSKPGQHGRTSGARTSDYGLQLREKQKLKRMYGVLEKQFRKYFVEAERRRGNTGETLIQLLESRLDNVVYRMGFGSTRAEARQLVSHRAIELNGHTADIASMLVKAGDVISIREKAKKQGRIRESLDLAASIGLPQWVEVDASKMTGTFKSAPDRADVARDVNESMVVELYSR</sequence>
<evidence type="ECO:0000255" key="1">
    <source>
        <dbReference type="HAMAP-Rule" id="MF_01306"/>
    </source>
</evidence>
<evidence type="ECO:0000256" key="2">
    <source>
        <dbReference type="SAM" id="MobiDB-lite"/>
    </source>
</evidence>
<evidence type="ECO:0000305" key="3"/>
<dbReference type="EMBL" id="BX640422">
    <property type="protein sequence ID" value="CAE43898.1"/>
    <property type="molecule type" value="Genomic_DNA"/>
</dbReference>
<dbReference type="EMBL" id="Z26647">
    <property type="protein sequence ID" value="CAA81389.1"/>
    <property type="molecule type" value="Genomic_DNA"/>
</dbReference>
<dbReference type="PIR" id="B55222">
    <property type="entry name" value="B55222"/>
</dbReference>
<dbReference type="RefSeq" id="NP_882150.1">
    <property type="nucleotide sequence ID" value="NC_002929.2"/>
</dbReference>
<dbReference type="RefSeq" id="WP_003806931.1">
    <property type="nucleotide sequence ID" value="NZ_CP039022.1"/>
</dbReference>
<dbReference type="SMR" id="P0A4C5"/>
<dbReference type="STRING" id="257313.BP3641"/>
<dbReference type="PaxDb" id="257313-BP3641"/>
<dbReference type="GeneID" id="93206286"/>
<dbReference type="KEGG" id="bpe:BP3641"/>
<dbReference type="PATRIC" id="fig|257313.5.peg.3938"/>
<dbReference type="eggNOG" id="COG0522">
    <property type="taxonomic scope" value="Bacteria"/>
</dbReference>
<dbReference type="HOGENOM" id="CLU_092403_0_2_4"/>
<dbReference type="Proteomes" id="UP000002676">
    <property type="component" value="Chromosome"/>
</dbReference>
<dbReference type="GO" id="GO:0015935">
    <property type="term" value="C:small ribosomal subunit"/>
    <property type="evidence" value="ECO:0007669"/>
    <property type="project" value="InterPro"/>
</dbReference>
<dbReference type="GO" id="GO:0019843">
    <property type="term" value="F:rRNA binding"/>
    <property type="evidence" value="ECO:0007669"/>
    <property type="project" value="UniProtKB-UniRule"/>
</dbReference>
<dbReference type="GO" id="GO:0003735">
    <property type="term" value="F:structural constituent of ribosome"/>
    <property type="evidence" value="ECO:0007669"/>
    <property type="project" value="InterPro"/>
</dbReference>
<dbReference type="GO" id="GO:0042274">
    <property type="term" value="P:ribosomal small subunit biogenesis"/>
    <property type="evidence" value="ECO:0007669"/>
    <property type="project" value="TreeGrafter"/>
</dbReference>
<dbReference type="GO" id="GO:0006412">
    <property type="term" value="P:translation"/>
    <property type="evidence" value="ECO:0007669"/>
    <property type="project" value="UniProtKB-UniRule"/>
</dbReference>
<dbReference type="CDD" id="cd00165">
    <property type="entry name" value="S4"/>
    <property type="match status" value="1"/>
</dbReference>
<dbReference type="FunFam" id="1.10.1050.10:FF:000001">
    <property type="entry name" value="30S ribosomal protein S4"/>
    <property type="match status" value="1"/>
</dbReference>
<dbReference type="FunFam" id="3.10.290.10:FF:000001">
    <property type="entry name" value="30S ribosomal protein S4"/>
    <property type="match status" value="1"/>
</dbReference>
<dbReference type="Gene3D" id="1.10.1050.10">
    <property type="entry name" value="Ribosomal Protein S4 Delta 41, Chain A, domain 1"/>
    <property type="match status" value="1"/>
</dbReference>
<dbReference type="Gene3D" id="3.10.290.10">
    <property type="entry name" value="RNA-binding S4 domain"/>
    <property type="match status" value="1"/>
</dbReference>
<dbReference type="HAMAP" id="MF_01306_B">
    <property type="entry name" value="Ribosomal_uS4_B"/>
    <property type="match status" value="1"/>
</dbReference>
<dbReference type="InterPro" id="IPR022801">
    <property type="entry name" value="Ribosomal_uS4"/>
</dbReference>
<dbReference type="InterPro" id="IPR005709">
    <property type="entry name" value="Ribosomal_uS4_bac-type"/>
</dbReference>
<dbReference type="InterPro" id="IPR018079">
    <property type="entry name" value="Ribosomal_uS4_CS"/>
</dbReference>
<dbReference type="InterPro" id="IPR001912">
    <property type="entry name" value="Ribosomal_uS4_N"/>
</dbReference>
<dbReference type="InterPro" id="IPR002942">
    <property type="entry name" value="S4_RNA-bd"/>
</dbReference>
<dbReference type="InterPro" id="IPR036986">
    <property type="entry name" value="S4_RNA-bd_sf"/>
</dbReference>
<dbReference type="NCBIfam" id="NF003717">
    <property type="entry name" value="PRK05327.1"/>
    <property type="match status" value="1"/>
</dbReference>
<dbReference type="NCBIfam" id="TIGR01017">
    <property type="entry name" value="rpsD_bact"/>
    <property type="match status" value="1"/>
</dbReference>
<dbReference type="PANTHER" id="PTHR11831">
    <property type="entry name" value="30S 40S RIBOSOMAL PROTEIN"/>
    <property type="match status" value="1"/>
</dbReference>
<dbReference type="PANTHER" id="PTHR11831:SF4">
    <property type="entry name" value="SMALL RIBOSOMAL SUBUNIT PROTEIN US4M"/>
    <property type="match status" value="1"/>
</dbReference>
<dbReference type="Pfam" id="PF00163">
    <property type="entry name" value="Ribosomal_S4"/>
    <property type="match status" value="1"/>
</dbReference>
<dbReference type="Pfam" id="PF01479">
    <property type="entry name" value="S4"/>
    <property type="match status" value="1"/>
</dbReference>
<dbReference type="SMART" id="SM01390">
    <property type="entry name" value="Ribosomal_S4"/>
    <property type="match status" value="1"/>
</dbReference>
<dbReference type="SMART" id="SM00363">
    <property type="entry name" value="S4"/>
    <property type="match status" value="1"/>
</dbReference>
<dbReference type="SUPFAM" id="SSF55174">
    <property type="entry name" value="Alpha-L RNA-binding motif"/>
    <property type="match status" value="1"/>
</dbReference>
<dbReference type="PROSITE" id="PS00632">
    <property type="entry name" value="RIBOSOMAL_S4"/>
    <property type="match status" value="1"/>
</dbReference>
<dbReference type="PROSITE" id="PS50889">
    <property type="entry name" value="S4"/>
    <property type="match status" value="1"/>
</dbReference>
<reference key="1">
    <citation type="journal article" date="2003" name="Nat. Genet.">
        <title>Comparative analysis of the genome sequences of Bordetella pertussis, Bordetella parapertussis and Bordetella bronchiseptica.</title>
        <authorList>
            <person name="Parkhill J."/>
            <person name="Sebaihia M."/>
            <person name="Preston A."/>
            <person name="Murphy L.D."/>
            <person name="Thomson N.R."/>
            <person name="Harris D.E."/>
            <person name="Holden M.T.G."/>
            <person name="Churcher C.M."/>
            <person name="Bentley S.D."/>
            <person name="Mungall K.L."/>
            <person name="Cerdeno-Tarraga A.-M."/>
            <person name="Temple L."/>
            <person name="James K.D."/>
            <person name="Harris B."/>
            <person name="Quail M.A."/>
            <person name="Achtman M."/>
            <person name="Atkin R."/>
            <person name="Baker S."/>
            <person name="Basham D."/>
            <person name="Bason N."/>
            <person name="Cherevach I."/>
            <person name="Chillingworth T."/>
            <person name="Collins M."/>
            <person name="Cronin A."/>
            <person name="Davis P."/>
            <person name="Doggett J."/>
            <person name="Feltwell T."/>
            <person name="Goble A."/>
            <person name="Hamlin N."/>
            <person name="Hauser H."/>
            <person name="Holroyd S."/>
            <person name="Jagels K."/>
            <person name="Leather S."/>
            <person name="Moule S."/>
            <person name="Norberczak H."/>
            <person name="O'Neil S."/>
            <person name="Ormond D."/>
            <person name="Price C."/>
            <person name="Rabbinowitsch E."/>
            <person name="Rutter S."/>
            <person name="Sanders M."/>
            <person name="Saunders D."/>
            <person name="Seeger K."/>
            <person name="Sharp S."/>
            <person name="Simmonds M."/>
            <person name="Skelton J."/>
            <person name="Squares R."/>
            <person name="Squares S."/>
            <person name="Stevens K."/>
            <person name="Unwin L."/>
            <person name="Whitehead S."/>
            <person name="Barrell B.G."/>
            <person name="Maskell D.J."/>
        </authorList>
    </citation>
    <scope>NUCLEOTIDE SEQUENCE [LARGE SCALE GENOMIC DNA]</scope>
    <source>
        <strain>Tohama I / ATCC BAA-589 / NCTC 13251</strain>
    </source>
</reference>
<reference key="2">
    <citation type="journal article" date="1994" name="J. Bacteriol.">
        <title>Effect of mutations causing overexpression of RNA polymerase alpha subunit on regulation of virulence factors in Bordetella pertussis.</title>
        <authorList>
            <person name="Carbonetti N.H."/>
            <person name="Fuchs T.M."/>
            <person name="Patamawenu A.A."/>
            <person name="Irish T.J."/>
            <person name="Deppisch H."/>
            <person name="Gross R."/>
        </authorList>
    </citation>
    <scope>NUCLEOTIDE SEQUENCE [GENOMIC DNA] OF 136-207</scope>
    <source>
        <strain>Tohama I / ATCC BAA-589 / NCTC 13251</strain>
    </source>
</reference>
<name>RS4_BORPE</name>
<gene>
    <name evidence="1" type="primary">rpsD</name>
    <name type="ordered locus">BP3641</name>
</gene>
<accession>P0A4C5</accession>
<accession>P46774</accession>
<proteinExistence type="inferred from homology"/>
<protein>
    <recommendedName>
        <fullName evidence="1">Small ribosomal subunit protein uS4</fullName>
    </recommendedName>
    <alternativeName>
        <fullName evidence="3">30S ribosomal protein S4</fullName>
    </alternativeName>
</protein>
<feature type="chain" id="PRO_0000132349" description="Small ribosomal subunit protein uS4">
    <location>
        <begin position="1"/>
        <end position="207"/>
    </location>
</feature>
<feature type="domain" description="S4 RNA-binding" evidence="1">
    <location>
        <begin position="97"/>
        <end position="162"/>
    </location>
</feature>
<feature type="region of interest" description="Disordered" evidence="2">
    <location>
        <begin position="31"/>
        <end position="51"/>
    </location>
</feature>
<comment type="function">
    <text evidence="1">One of the primary rRNA binding proteins, it binds directly to 16S rRNA where it nucleates assembly of the body of the 30S subunit.</text>
</comment>
<comment type="function">
    <text evidence="1">With S5 and S12 plays an important role in translational accuracy.</text>
</comment>
<comment type="subunit">
    <text evidence="1">Part of the 30S ribosomal subunit. Contacts protein S5. The interaction surface between S4 and S5 is involved in control of translational fidelity.</text>
</comment>
<comment type="similarity">
    <text evidence="1">Belongs to the universal ribosomal protein uS4 family.</text>
</comment>
<organism>
    <name type="scientific">Bordetella pertussis (strain Tohama I / ATCC BAA-589 / NCTC 13251)</name>
    <dbReference type="NCBI Taxonomy" id="257313"/>
    <lineage>
        <taxon>Bacteria</taxon>
        <taxon>Pseudomonadati</taxon>
        <taxon>Pseudomonadota</taxon>
        <taxon>Betaproteobacteria</taxon>
        <taxon>Burkholderiales</taxon>
        <taxon>Alcaligenaceae</taxon>
        <taxon>Bordetella</taxon>
    </lineage>
</organism>
<keyword id="KW-1185">Reference proteome</keyword>
<keyword id="KW-0687">Ribonucleoprotein</keyword>
<keyword id="KW-0689">Ribosomal protein</keyword>
<keyword id="KW-0694">RNA-binding</keyword>
<keyword id="KW-0699">rRNA-binding</keyword>